<accession>P54868</accession>
<accession>B7Z8R3</accession>
<accession>D3Y5K6</accession>
<accession>Q5SZU2</accession>
<accession>Q6IBF4</accession>
<name>HMCS2_HUMAN</name>
<reference key="1">
    <citation type="journal article" date="1995" name="Arch. Biochem. Biophys.">
        <title>Molecular cloning and tissue expression of human mitochondrial 3-hydroxy-3-methylglutaryl-CoA synthase.</title>
        <authorList>
            <person name="Mascaro C."/>
            <person name="Buesa C."/>
            <person name="Ortiz J.A."/>
            <person name="Haro D."/>
            <person name="Hegardt F.G."/>
        </authorList>
    </citation>
    <scope>NUCLEOTIDE SEQUENCE [MRNA] (ISOFORM 1)</scope>
    <scope>TISSUE SPECIFICITY</scope>
</reference>
<reference key="2">
    <citation type="journal article" date="1997" name="Gene">
        <title>Cloning and characterization of the human mitochondrial 3-hydroxy-3-methylglutaryl CoA synthase gene.</title>
        <authorList>
            <person name="Boukaftane Y."/>
            <person name="Mitchell G.A."/>
        </authorList>
    </citation>
    <scope>NUCLEOTIDE SEQUENCE [GENOMIC DNA]</scope>
    <source>
        <tissue>Liver</tissue>
    </source>
</reference>
<reference key="3">
    <citation type="submission" date="2003-08" db="EMBL/GenBank/DDBJ databases">
        <title>Cloning of human full-length CDSs in BD Creator(TM) system donor vector.</title>
        <authorList>
            <person name="Kalnine N."/>
            <person name="Chen X."/>
            <person name="Rolfs A."/>
            <person name="Halleck A."/>
            <person name="Hines L."/>
            <person name="Eisenstein S."/>
            <person name="Koundinya M."/>
            <person name="Raphael J."/>
            <person name="Moreira D."/>
            <person name="Kelley T."/>
            <person name="LaBaer J."/>
            <person name="Lin Y."/>
            <person name="Phelan M."/>
            <person name="Farmer A."/>
        </authorList>
    </citation>
    <scope>NUCLEOTIDE SEQUENCE [LARGE SCALE MRNA] (ISOFORM 1)</scope>
</reference>
<reference key="4">
    <citation type="journal article" date="2004" name="Nat. Genet.">
        <title>Complete sequencing and characterization of 21,243 full-length human cDNAs.</title>
        <authorList>
            <person name="Ota T."/>
            <person name="Suzuki Y."/>
            <person name="Nishikawa T."/>
            <person name="Otsuki T."/>
            <person name="Sugiyama T."/>
            <person name="Irie R."/>
            <person name="Wakamatsu A."/>
            <person name="Hayashi K."/>
            <person name="Sato H."/>
            <person name="Nagai K."/>
            <person name="Kimura K."/>
            <person name="Makita H."/>
            <person name="Sekine M."/>
            <person name="Obayashi M."/>
            <person name="Nishi T."/>
            <person name="Shibahara T."/>
            <person name="Tanaka T."/>
            <person name="Ishii S."/>
            <person name="Yamamoto J."/>
            <person name="Saito K."/>
            <person name="Kawai Y."/>
            <person name="Isono Y."/>
            <person name="Nakamura Y."/>
            <person name="Nagahari K."/>
            <person name="Murakami K."/>
            <person name="Yasuda T."/>
            <person name="Iwayanagi T."/>
            <person name="Wagatsuma M."/>
            <person name="Shiratori A."/>
            <person name="Sudo H."/>
            <person name="Hosoiri T."/>
            <person name="Kaku Y."/>
            <person name="Kodaira H."/>
            <person name="Kondo H."/>
            <person name="Sugawara M."/>
            <person name="Takahashi M."/>
            <person name="Kanda K."/>
            <person name="Yokoi T."/>
            <person name="Furuya T."/>
            <person name="Kikkawa E."/>
            <person name="Omura Y."/>
            <person name="Abe K."/>
            <person name="Kamihara K."/>
            <person name="Katsuta N."/>
            <person name="Sato K."/>
            <person name="Tanikawa M."/>
            <person name="Yamazaki M."/>
            <person name="Ninomiya K."/>
            <person name="Ishibashi T."/>
            <person name="Yamashita H."/>
            <person name="Murakawa K."/>
            <person name="Fujimori K."/>
            <person name="Tanai H."/>
            <person name="Kimata M."/>
            <person name="Watanabe M."/>
            <person name="Hiraoka S."/>
            <person name="Chiba Y."/>
            <person name="Ishida S."/>
            <person name="Ono Y."/>
            <person name="Takiguchi S."/>
            <person name="Watanabe S."/>
            <person name="Yosida M."/>
            <person name="Hotuta T."/>
            <person name="Kusano J."/>
            <person name="Kanehori K."/>
            <person name="Takahashi-Fujii A."/>
            <person name="Hara H."/>
            <person name="Tanase T.-O."/>
            <person name="Nomura Y."/>
            <person name="Togiya S."/>
            <person name="Komai F."/>
            <person name="Hara R."/>
            <person name="Takeuchi K."/>
            <person name="Arita M."/>
            <person name="Imose N."/>
            <person name="Musashino K."/>
            <person name="Yuuki H."/>
            <person name="Oshima A."/>
            <person name="Sasaki N."/>
            <person name="Aotsuka S."/>
            <person name="Yoshikawa Y."/>
            <person name="Matsunawa H."/>
            <person name="Ichihara T."/>
            <person name="Shiohata N."/>
            <person name="Sano S."/>
            <person name="Moriya S."/>
            <person name="Momiyama H."/>
            <person name="Satoh N."/>
            <person name="Takami S."/>
            <person name="Terashima Y."/>
            <person name="Suzuki O."/>
            <person name="Nakagawa S."/>
            <person name="Senoh A."/>
            <person name="Mizoguchi H."/>
            <person name="Goto Y."/>
            <person name="Shimizu F."/>
            <person name="Wakebe H."/>
            <person name="Hishigaki H."/>
            <person name="Watanabe T."/>
            <person name="Sugiyama A."/>
            <person name="Takemoto M."/>
            <person name="Kawakami B."/>
            <person name="Yamazaki M."/>
            <person name="Watanabe K."/>
            <person name="Kumagai A."/>
            <person name="Itakura S."/>
            <person name="Fukuzumi Y."/>
            <person name="Fujimori Y."/>
            <person name="Komiyama M."/>
            <person name="Tashiro H."/>
            <person name="Tanigami A."/>
            <person name="Fujiwara T."/>
            <person name="Ono T."/>
            <person name="Yamada K."/>
            <person name="Fujii Y."/>
            <person name="Ozaki K."/>
            <person name="Hirao M."/>
            <person name="Ohmori Y."/>
            <person name="Kawabata A."/>
            <person name="Hikiji T."/>
            <person name="Kobatake N."/>
            <person name="Inagaki H."/>
            <person name="Ikema Y."/>
            <person name="Okamoto S."/>
            <person name="Okitani R."/>
            <person name="Kawakami T."/>
            <person name="Noguchi S."/>
            <person name="Itoh T."/>
            <person name="Shigeta K."/>
            <person name="Senba T."/>
            <person name="Matsumura K."/>
            <person name="Nakajima Y."/>
            <person name="Mizuno T."/>
            <person name="Morinaga M."/>
            <person name="Sasaki M."/>
            <person name="Togashi T."/>
            <person name="Oyama M."/>
            <person name="Hata H."/>
            <person name="Watanabe M."/>
            <person name="Komatsu T."/>
            <person name="Mizushima-Sugano J."/>
            <person name="Satoh T."/>
            <person name="Shirai Y."/>
            <person name="Takahashi Y."/>
            <person name="Nakagawa K."/>
            <person name="Okumura K."/>
            <person name="Nagase T."/>
            <person name="Nomura N."/>
            <person name="Kikuchi H."/>
            <person name="Masuho Y."/>
            <person name="Yamashita R."/>
            <person name="Nakai K."/>
            <person name="Yada T."/>
            <person name="Nakamura Y."/>
            <person name="Ohara O."/>
            <person name="Isogai T."/>
            <person name="Sugano S."/>
        </authorList>
    </citation>
    <scope>NUCLEOTIDE SEQUENCE [LARGE SCALE MRNA] (ISOFORM 2)</scope>
    <source>
        <tissue>Liver</tissue>
    </source>
</reference>
<reference key="5">
    <citation type="journal article" date="2006" name="Nature">
        <title>The DNA sequence and biological annotation of human chromosome 1.</title>
        <authorList>
            <person name="Gregory S.G."/>
            <person name="Barlow K.F."/>
            <person name="McLay K.E."/>
            <person name="Kaul R."/>
            <person name="Swarbreck D."/>
            <person name="Dunham A."/>
            <person name="Scott C.E."/>
            <person name="Howe K.L."/>
            <person name="Woodfine K."/>
            <person name="Spencer C.C.A."/>
            <person name="Jones M.C."/>
            <person name="Gillson C."/>
            <person name="Searle S."/>
            <person name="Zhou Y."/>
            <person name="Kokocinski F."/>
            <person name="McDonald L."/>
            <person name="Evans R."/>
            <person name="Phillips K."/>
            <person name="Atkinson A."/>
            <person name="Cooper R."/>
            <person name="Jones C."/>
            <person name="Hall R.E."/>
            <person name="Andrews T.D."/>
            <person name="Lloyd C."/>
            <person name="Ainscough R."/>
            <person name="Almeida J.P."/>
            <person name="Ambrose K.D."/>
            <person name="Anderson F."/>
            <person name="Andrew R.W."/>
            <person name="Ashwell R.I.S."/>
            <person name="Aubin K."/>
            <person name="Babbage A.K."/>
            <person name="Bagguley C.L."/>
            <person name="Bailey J."/>
            <person name="Beasley H."/>
            <person name="Bethel G."/>
            <person name="Bird C.P."/>
            <person name="Bray-Allen S."/>
            <person name="Brown J.Y."/>
            <person name="Brown A.J."/>
            <person name="Buckley D."/>
            <person name="Burton J."/>
            <person name="Bye J."/>
            <person name="Carder C."/>
            <person name="Chapman J.C."/>
            <person name="Clark S.Y."/>
            <person name="Clarke G."/>
            <person name="Clee C."/>
            <person name="Cobley V."/>
            <person name="Collier R.E."/>
            <person name="Corby N."/>
            <person name="Coville G.J."/>
            <person name="Davies J."/>
            <person name="Deadman R."/>
            <person name="Dunn M."/>
            <person name="Earthrowl M."/>
            <person name="Ellington A.G."/>
            <person name="Errington H."/>
            <person name="Frankish A."/>
            <person name="Frankland J."/>
            <person name="French L."/>
            <person name="Garner P."/>
            <person name="Garnett J."/>
            <person name="Gay L."/>
            <person name="Ghori M.R.J."/>
            <person name="Gibson R."/>
            <person name="Gilby L.M."/>
            <person name="Gillett W."/>
            <person name="Glithero R.J."/>
            <person name="Grafham D.V."/>
            <person name="Griffiths C."/>
            <person name="Griffiths-Jones S."/>
            <person name="Grocock R."/>
            <person name="Hammond S."/>
            <person name="Harrison E.S.I."/>
            <person name="Hart E."/>
            <person name="Haugen E."/>
            <person name="Heath P.D."/>
            <person name="Holmes S."/>
            <person name="Holt K."/>
            <person name="Howden P.J."/>
            <person name="Hunt A.R."/>
            <person name="Hunt S.E."/>
            <person name="Hunter G."/>
            <person name="Isherwood J."/>
            <person name="James R."/>
            <person name="Johnson C."/>
            <person name="Johnson D."/>
            <person name="Joy A."/>
            <person name="Kay M."/>
            <person name="Kershaw J.K."/>
            <person name="Kibukawa M."/>
            <person name="Kimberley A.M."/>
            <person name="King A."/>
            <person name="Knights A.J."/>
            <person name="Lad H."/>
            <person name="Laird G."/>
            <person name="Lawlor S."/>
            <person name="Leongamornlert D.A."/>
            <person name="Lloyd D.M."/>
            <person name="Loveland J."/>
            <person name="Lovell J."/>
            <person name="Lush M.J."/>
            <person name="Lyne R."/>
            <person name="Martin S."/>
            <person name="Mashreghi-Mohammadi M."/>
            <person name="Matthews L."/>
            <person name="Matthews N.S.W."/>
            <person name="McLaren S."/>
            <person name="Milne S."/>
            <person name="Mistry S."/>
            <person name="Moore M.J.F."/>
            <person name="Nickerson T."/>
            <person name="O'Dell C.N."/>
            <person name="Oliver K."/>
            <person name="Palmeiri A."/>
            <person name="Palmer S.A."/>
            <person name="Parker A."/>
            <person name="Patel D."/>
            <person name="Pearce A.V."/>
            <person name="Peck A.I."/>
            <person name="Pelan S."/>
            <person name="Phelps K."/>
            <person name="Phillimore B.J."/>
            <person name="Plumb R."/>
            <person name="Rajan J."/>
            <person name="Raymond C."/>
            <person name="Rouse G."/>
            <person name="Saenphimmachak C."/>
            <person name="Sehra H.K."/>
            <person name="Sheridan E."/>
            <person name="Shownkeen R."/>
            <person name="Sims S."/>
            <person name="Skuce C.D."/>
            <person name="Smith M."/>
            <person name="Steward C."/>
            <person name="Subramanian S."/>
            <person name="Sycamore N."/>
            <person name="Tracey A."/>
            <person name="Tromans A."/>
            <person name="Van Helmond Z."/>
            <person name="Wall M."/>
            <person name="Wallis J.M."/>
            <person name="White S."/>
            <person name="Whitehead S.L."/>
            <person name="Wilkinson J.E."/>
            <person name="Willey D.L."/>
            <person name="Williams H."/>
            <person name="Wilming L."/>
            <person name="Wray P.W."/>
            <person name="Wu Z."/>
            <person name="Coulson A."/>
            <person name="Vaudin M."/>
            <person name="Sulston J.E."/>
            <person name="Durbin R.M."/>
            <person name="Hubbard T."/>
            <person name="Wooster R."/>
            <person name="Dunham I."/>
            <person name="Carter N.P."/>
            <person name="McVean G."/>
            <person name="Ross M.T."/>
            <person name="Harrow J."/>
            <person name="Olson M.V."/>
            <person name="Beck S."/>
            <person name="Rogers J."/>
            <person name="Bentley D.R."/>
        </authorList>
    </citation>
    <scope>NUCLEOTIDE SEQUENCE [LARGE SCALE GENOMIC DNA]</scope>
</reference>
<reference key="6">
    <citation type="submission" date="2005-07" db="EMBL/GenBank/DDBJ databases">
        <authorList>
            <person name="Mural R.J."/>
            <person name="Istrail S."/>
            <person name="Sutton G.G."/>
            <person name="Florea L."/>
            <person name="Halpern A.L."/>
            <person name="Mobarry C.M."/>
            <person name="Lippert R."/>
            <person name="Walenz B."/>
            <person name="Shatkay H."/>
            <person name="Dew I."/>
            <person name="Miller J.R."/>
            <person name="Flanigan M.J."/>
            <person name="Edwards N.J."/>
            <person name="Bolanos R."/>
            <person name="Fasulo D."/>
            <person name="Halldorsson B.V."/>
            <person name="Hannenhalli S."/>
            <person name="Turner R."/>
            <person name="Yooseph S."/>
            <person name="Lu F."/>
            <person name="Nusskern D.R."/>
            <person name="Shue B.C."/>
            <person name="Zheng X.H."/>
            <person name="Zhong F."/>
            <person name="Delcher A.L."/>
            <person name="Huson D.H."/>
            <person name="Kravitz S.A."/>
            <person name="Mouchard L."/>
            <person name="Reinert K."/>
            <person name="Remington K.A."/>
            <person name="Clark A.G."/>
            <person name="Waterman M.S."/>
            <person name="Eichler E.E."/>
            <person name="Adams M.D."/>
            <person name="Hunkapiller M.W."/>
            <person name="Myers E.W."/>
            <person name="Venter J.C."/>
        </authorList>
    </citation>
    <scope>NUCLEOTIDE SEQUENCE [LARGE SCALE GENOMIC DNA]</scope>
</reference>
<reference key="7">
    <citation type="journal article" date="2004" name="Genome Res.">
        <title>The status, quality, and expansion of the NIH full-length cDNA project: the Mammalian Gene Collection (MGC).</title>
        <authorList>
            <consortium name="The MGC Project Team"/>
        </authorList>
    </citation>
    <scope>NUCLEOTIDE SEQUENCE [LARGE SCALE MRNA] (ISOFORM 1)</scope>
    <source>
        <tissue>Brain</tissue>
    </source>
</reference>
<reference key="8">
    <citation type="journal article" date="1994" name="Genomics">
        <title>Human mitochondrial HMG CoA synthase: liver cDNA and partial genomic cloning, chromosome mapping to 1p12-p13, and possible role in vertebrate evolution.</title>
        <authorList>
            <person name="Boukaftane Y."/>
            <person name="Duncan A."/>
            <person name="Wang S."/>
            <person name="Labuda D."/>
            <person name="Robert M.-F."/>
            <person name="Sarrazin J."/>
            <person name="Schappert K.T."/>
            <person name="Mitchell G.A."/>
        </authorList>
    </citation>
    <scope>NUCLEOTIDE SEQUENCE [MRNA] OF 36-508 (ISOFORM 1)</scope>
    <source>
        <tissue>Liver</tissue>
    </source>
</reference>
<reference key="9">
    <citation type="journal article" date="2012" name="Mol. Biol. Rep.">
        <title>Characterization of splice variants of the genes encoding human mitochondrial HMG-CoA lyase and HMG-CoA synthase, the main enzymes of the ketogenesis pathway.</title>
        <authorList>
            <person name="Puisac B."/>
            <person name="Ramos M."/>
            <person name="Arnedo M."/>
            <person name="Menao S."/>
            <person name="Gil-Rodriguez M.C."/>
            <person name="Teresa-Rodrigo M.E."/>
            <person name="Pie A."/>
            <person name="de Karam J.C."/>
            <person name="Wesselink J.J."/>
            <person name="Gimenez I."/>
            <person name="Ramos F.J."/>
            <person name="Casals N."/>
            <person name="Gomez-Puertas P."/>
            <person name="Hegardt F.G."/>
            <person name="Pie J."/>
        </authorList>
    </citation>
    <scope>NUCLEOTIDE SEQUENCE [MRNA] OF 91-316 (ISOFORM 3)</scope>
    <scope>ALTERNATIVE SPLICING</scope>
    <scope>TISSUE SPECIFICITY</scope>
</reference>
<reference key="10">
    <citation type="journal article" date="2006" name="Mol. Cancer Res.">
        <title>Ketogenic HMGCS2 Is a c-Myc target gene expressed in differentiated cells of human colonic epithelium and down-regulated in colon cancer.</title>
        <authorList>
            <person name="Camarero N."/>
            <person name="Mascaro C."/>
            <person name="Mayordomo C."/>
            <person name="Vilardell F."/>
            <person name="Haro D."/>
            <person name="Marrero P.F."/>
        </authorList>
    </citation>
    <scope>TISSUE SPECIFICITY</scope>
</reference>
<reference key="11">
    <citation type="journal article" date="2014" name="J. Proteomics">
        <title>An enzyme assisted RP-RPLC approach for in-depth analysis of human liver phosphoproteome.</title>
        <authorList>
            <person name="Bian Y."/>
            <person name="Song C."/>
            <person name="Cheng K."/>
            <person name="Dong M."/>
            <person name="Wang F."/>
            <person name="Huang J."/>
            <person name="Sun D."/>
            <person name="Wang L."/>
            <person name="Ye M."/>
            <person name="Zou H."/>
        </authorList>
    </citation>
    <scope>PHOSPHORYLATION [LARGE SCALE ANALYSIS] AT SER-433 AND SER-440</scope>
    <scope>IDENTIFICATION BY MASS SPECTROMETRY [LARGE SCALE ANALYSIS]</scope>
    <source>
        <tissue>Liver</tissue>
    </source>
</reference>
<reference key="12">
    <citation type="journal article" date="2010" name="J. Mol. Biol.">
        <title>Crystal structures of human HMG-CoA synthase isoforms provide insights into inherited ketogenesis disorders and inhibitor design.</title>
        <authorList>
            <person name="Shafqat N."/>
            <person name="Turnbull A."/>
            <person name="Zschocke J."/>
            <person name="Oppermann U."/>
            <person name="Yue W.W."/>
        </authorList>
    </citation>
    <scope>X-RAY CRYSTALLOGRAPHY (1.7 ANGSTROMS) OF 51-508 IN COMPLEX WITH 3-HYDROXY-3-METHYLGLUTARYL-COENZYME A</scope>
    <scope>SUBUNIT</scope>
    <scope>ACTIVE SITE</scope>
</reference>
<reference key="13">
    <citation type="journal article" date="2001" name="Hum. Genet.">
        <title>Genetic basis of mitochondrial HMG-CoA synthase deficiency.</title>
        <authorList>
            <person name="Aledo R."/>
            <person name="Zschocke J."/>
            <person name="Pie J."/>
            <person name="Mir C."/>
            <person name="Fiesel S."/>
            <person name="Mayatepek E."/>
            <person name="Hoffmann G.F."/>
            <person name="Casals N."/>
            <person name="Hegardt F.G."/>
        </authorList>
    </citation>
    <scope>VARIANTS HMGCS2D ARG-212 AND HIS-500</scope>
</reference>
<reference key="14">
    <citation type="journal article" date="2001" name="Pediatr. Res.">
        <title>Mitochondrial 3-hydroxy-3-methylglutaryl-CoA synthase deficiency: clinical course and description of causal mutations in two patients.</title>
        <authorList>
            <person name="Bouchard L."/>
            <person name="Robert M.-F."/>
            <person name="Vinarov D."/>
            <person name="Stanley C.A."/>
            <person name="Thompson G.N."/>
            <person name="Morris A."/>
            <person name="Leonard J.V."/>
            <person name="Quant P."/>
            <person name="Hsu B.Y.L."/>
            <person name="Boneh A."/>
            <person name="Boukaftane Y."/>
            <person name="Ashmarina L."/>
            <person name="Wang S."/>
            <person name="Miziorko H."/>
            <person name="Mitchell G.A."/>
        </authorList>
    </citation>
    <scope>VARIANT HMGCS2D LEU-174</scope>
    <scope>CHARACTERIZATION OF VARIANT HMGCS2D LEU-174</scope>
    <scope>CATALYTIC ACTIVITY</scope>
    <scope>FUNCTION</scope>
</reference>
<reference key="15">
    <citation type="journal article" date="2003" name="Eur. J. Pediatr.">
        <title>Mitochondrial HMG-CoA synthase deficiency: identification of two further patients carrying two novel mutations.</title>
        <authorList>
            <person name="Wolf N.I."/>
            <person name="Rahman S."/>
            <person name="Clayton P.T."/>
            <person name="Zschocke J."/>
        </authorList>
    </citation>
    <scope>VARIANTS HMGCS2D MET-54 AND CYS-167</scope>
</reference>
<reference key="16">
    <citation type="journal article" date="2006" name="J. Inherit. Metab. Dis.">
        <title>Refining the diagnosis of mitochondrial HMG-CoA synthase deficiency.</title>
        <authorList>
            <person name="Aledo R."/>
            <person name="Mir C."/>
            <person name="Dalton R.N."/>
            <person name="Turner C."/>
            <person name="Pie J."/>
            <person name="Hegardt F.G."/>
            <person name="Casals N."/>
            <person name="Champion M.P."/>
        </authorList>
    </citation>
    <scope>VARIANTS HMGCS2D HIS-188 AND THR-307</scope>
</reference>
<reference key="17">
    <citation type="journal article" date="2013" name="Eur. J. Med. Genet.">
        <title>New case of mitochondrial HMG-CoA synthase deficiency. Functional analysis of eight mutations.</title>
        <authorList>
            <person name="Ramos M."/>
            <person name="Menao S."/>
            <person name="Arnedo M."/>
            <person name="Puisac B."/>
            <person name="Gil-Rodriguez M.C."/>
            <person name="Teresa-Rodrigo M.E."/>
            <person name="Hernandez-Marcos M."/>
            <person name="Pierre G."/>
            <person name="Ramaswami U."/>
            <person name="Baquero-Montoya C."/>
            <person name="Bueno G."/>
            <person name="Casale C."/>
            <person name="Hegardt F.G."/>
            <person name="Gomez-Puertas P."/>
            <person name="Pie J."/>
        </authorList>
    </citation>
    <scope>CATALYTIC ACTIVITY</scope>
    <scope>FUNCTION</scope>
    <scope>VARIANTS HMGCS2D MET-54; CYS-167; LEU-174; HIS-188; ARG-212; THR-307; ARG-388; 424-ARG--VAL-508 DEL AND HIS-500</scope>
    <scope>CHARACTERIZATION OF VARIANTS HMGCS2D MET-54; CYS-167; LEU-174; HIS-188; ARG-212; THR-307; ARG-388 AND HIS-500</scope>
    <scope>BIOPHYSICOCHEMICAL PROPERTIES</scope>
</reference>
<reference key="18">
    <citation type="journal article" date="2015" name="J. Inherit. Metab. Dis.">
        <title>Mitochondrial 3-hydroxy-3-methylglutaryl-CoA synthase deficiency: urinary organic acid profiles and expanded spectrum of mutations.</title>
        <authorList>
            <person name="Pitt J.J."/>
            <person name="Peters H."/>
            <person name="Boneh A."/>
            <person name="Yaplito-Lee J."/>
            <person name="Wieser S."/>
            <person name="Hinderhofer K."/>
            <person name="Johnson D."/>
            <person name="Zschocke J."/>
        </authorList>
    </citation>
    <scope>VARIANTS HMGCS2D SER-168; ASP-169; ARG-185; VAL-232; SER-266; PRO-360; THR-470; CYS-503 AND GLN-505</scope>
</reference>
<reference key="19">
    <citation type="journal article" date="2018" name="Int. J. Mol. Sci.">
        <title>Human Mitochondrial HMG-CoA Synthase Deficiency: Role of Enzyme Dimerization Surface and Characterization of Three New Patients.</title>
        <authorList>
            <person name="Puisac B."/>
            <person name="Marcos-Alcalde I."/>
            <person name="Hernandez-Marcos M."/>
            <person name="Tobajas Morlana P."/>
            <person name="Levtova A."/>
            <person name="Schwahn B.C."/>
            <person name="DeLaet C."/>
            <person name="Lace B."/>
            <person name="Gomez-Puertas P."/>
            <person name="Pie J."/>
        </authorList>
    </citation>
    <scope>VARIANTS HMGCS2D TRP-112 AND LEU-144</scope>
    <scope>CHARACTERIZATION OF VARIANTS HMGCS2D TRP-112 AND LEU-144</scope>
    <scope>CATALYTIC ACTIVITY</scope>
    <scope>FUNCTION</scope>
</reference>
<sequence>MQRLLTPVKRILQLTRAVQETSLTPARLLPVAHQRFSTASAVPLAKTDTWPKDVGILALEVYFPAQYVDQTDLEKYNNVEAGKYTVGLGQTRMGFCSVQEDINSLCLTVVQRLMERIQLPWDSVGRLEVGTETIIDKSKAVKTVLMELFQDSGNTDIEGIDTTNACYGGTASLFNAANWMESSSWDGRYAMVVCGDIAVYPSGNARPTGGAGAVAMLIGPKAPLALERGLRGTHMENVYDFYKPNLASEYPIVDGKLSIQCYLRALDRCYTSYRKKIQNQWKQAGSDRPFTLDDLQYMIFHTPFCKMVQKSLARLMFNDFLSASSDTQTSLYKGLEAFGGLKLEDTYTNKDLDKALLKASQDMFDKKTKASLYLSTHNGNMYTSSLYGCLASLLSHHSAQELAGSRIGAFSYGSGLAASFFSFRVSQDAAPGSPLDKLVSSTSDLPKRLASRKCVSPEEFTEIMNQREQFYHKVNFSPPGDTNSLFPGTWYLERVDEQHRRKYARRPV</sequence>
<gene>
    <name type="primary">HMGCS2</name>
</gene>
<keyword id="KW-0002">3D-structure</keyword>
<keyword id="KW-0007">Acetylation</keyword>
<keyword id="KW-0025">Alternative splicing</keyword>
<keyword id="KW-0152">Cholesterol biosynthesis</keyword>
<keyword id="KW-0153">Cholesterol metabolism</keyword>
<keyword id="KW-0225">Disease variant</keyword>
<keyword id="KW-0444">Lipid biosynthesis</keyword>
<keyword id="KW-0443">Lipid metabolism</keyword>
<keyword id="KW-0496">Mitochondrion</keyword>
<keyword id="KW-0597">Phosphoprotein</keyword>
<keyword id="KW-1267">Proteomics identification</keyword>
<keyword id="KW-1185">Reference proteome</keyword>
<keyword id="KW-0752">Steroid biosynthesis</keyword>
<keyword id="KW-0753">Steroid metabolism</keyword>
<keyword id="KW-0756">Sterol biosynthesis</keyword>
<keyword id="KW-1207">Sterol metabolism</keyword>
<keyword id="KW-0808">Transferase</keyword>
<keyword id="KW-0809">Transit peptide</keyword>
<feature type="transit peptide" description="Mitochondrion" evidence="18">
    <location>
        <begin position="1"/>
        <end position="37"/>
    </location>
</feature>
<feature type="chain" id="PRO_0000013483" description="Hydroxymethylglutaryl-CoA synthase, mitochondrial">
    <location>
        <begin position="38"/>
        <end position="508"/>
    </location>
</feature>
<feature type="active site" description="Proton donor/acceptor" evidence="20">
    <location>
        <position position="132"/>
    </location>
</feature>
<feature type="active site" description="Acyl-thioester intermediate" evidence="4 10">
    <location>
        <position position="166"/>
    </location>
</feature>
<feature type="active site" description="Proton donor/acceptor" evidence="20">
    <location>
        <position position="301"/>
    </location>
</feature>
<feature type="binding site" evidence="10 23">
    <location>
        <position position="80"/>
    </location>
    <ligand>
        <name>(3S)-3-hydroxy-3-methylglutaryl-CoA</name>
        <dbReference type="ChEBI" id="CHEBI:43074"/>
    </ligand>
</feature>
<feature type="binding site" evidence="10 23">
    <location>
        <position position="81"/>
    </location>
    <ligand>
        <name>(3S)-3-hydroxy-3-methylglutaryl-CoA</name>
        <dbReference type="ChEBI" id="CHEBI:43074"/>
    </ligand>
</feature>
<feature type="binding site" evidence="10 23">
    <location>
        <position position="166"/>
    </location>
    <ligand>
        <name>(3S)-3-hydroxy-3-methylglutaryl-CoA</name>
        <dbReference type="ChEBI" id="CHEBI:43074"/>
    </ligand>
</feature>
<feature type="binding site" evidence="10 23">
    <location>
        <position position="204"/>
    </location>
    <ligand>
        <name>(3S)-3-hydroxy-3-methylglutaryl-CoA</name>
        <dbReference type="ChEBI" id="CHEBI:43074"/>
    </ligand>
</feature>
<feature type="binding site" evidence="10 23">
    <location>
        <position position="208"/>
    </location>
    <ligand>
        <name>(3S)-3-hydroxy-3-methylglutaryl-CoA</name>
        <dbReference type="ChEBI" id="CHEBI:43074"/>
    </ligand>
</feature>
<feature type="binding site" evidence="10 23">
    <location>
        <position position="258"/>
    </location>
    <ligand>
        <name>(3S)-3-hydroxy-3-methylglutaryl-CoA</name>
        <dbReference type="ChEBI" id="CHEBI:43074"/>
    </ligand>
</feature>
<feature type="binding site" evidence="10 23">
    <location>
        <position position="301"/>
    </location>
    <ligand>
        <name>(3S)-3-hydroxy-3-methylglutaryl-CoA</name>
        <dbReference type="ChEBI" id="CHEBI:43074"/>
    </ligand>
</feature>
<feature type="binding site" evidence="10 23">
    <location>
        <position position="310"/>
    </location>
    <ligand>
        <name>(3S)-3-hydroxy-3-methylglutaryl-CoA</name>
        <dbReference type="ChEBI" id="CHEBI:43074"/>
    </ligand>
</feature>
<feature type="binding site" evidence="10 23">
    <location>
        <position position="380"/>
    </location>
    <ligand>
        <name>(3S)-3-hydroxy-3-methylglutaryl-CoA</name>
        <dbReference type="ChEBI" id="CHEBI:43074"/>
    </ligand>
</feature>
<feature type="binding site" evidence="10 23">
    <location>
        <position position="414"/>
    </location>
    <ligand>
        <name>(3S)-3-hydroxy-3-methylglutaryl-CoA</name>
        <dbReference type="ChEBI" id="CHEBI:43074"/>
    </ligand>
</feature>
<feature type="modified residue" description="N6-succinyllysine" evidence="2">
    <location>
        <position position="52"/>
    </location>
</feature>
<feature type="modified residue" description="N6-acetyllysine; alternate" evidence="2">
    <location>
        <position position="83"/>
    </location>
</feature>
<feature type="modified residue" description="N6-succinyllysine; alternate" evidence="2">
    <location>
        <position position="83"/>
    </location>
</feature>
<feature type="modified residue" description="N6-succinyllysine" evidence="2">
    <location>
        <position position="221"/>
    </location>
</feature>
<feature type="modified residue" description="N6-acetyllysine" evidence="2">
    <location>
        <position position="243"/>
    </location>
</feature>
<feature type="modified residue" description="N6-acetyllysine; alternate" evidence="2">
    <location>
        <position position="256"/>
    </location>
</feature>
<feature type="modified residue" description="N6-succinyllysine; alternate" evidence="2">
    <location>
        <position position="256"/>
    </location>
</feature>
<feature type="modified residue" description="N6-acetyllysine" evidence="2">
    <location>
        <position position="306"/>
    </location>
</feature>
<feature type="modified residue" description="N6-acetyllysine; alternate" evidence="2">
    <location>
        <position position="310"/>
    </location>
</feature>
<feature type="modified residue" description="N6-succinyllysine; alternate" evidence="3">
    <location>
        <position position="310"/>
    </location>
</feature>
<feature type="modified residue" description="N6-succinyllysine" evidence="2">
    <location>
        <position position="333"/>
    </location>
</feature>
<feature type="modified residue" description="N6-acetyllysine; alternate" evidence="2">
    <location>
        <position position="342"/>
    </location>
</feature>
<feature type="modified residue" description="N6-succinyllysine; alternate" evidence="2">
    <location>
        <position position="342"/>
    </location>
</feature>
<feature type="modified residue" description="N6-acetyllysine; alternate" evidence="2">
    <location>
        <position position="350"/>
    </location>
</feature>
<feature type="modified residue" description="N6-succinyllysine; alternate" evidence="2">
    <location>
        <position position="350"/>
    </location>
</feature>
<feature type="modified residue" description="N6-acetyllysine; alternate" evidence="2">
    <location>
        <position position="354"/>
    </location>
</feature>
<feature type="modified residue" description="N6-succinyllysine; alternate" evidence="2">
    <location>
        <position position="354"/>
    </location>
</feature>
<feature type="modified residue" description="N6-acetyllysine; alternate" evidence="2">
    <location>
        <position position="358"/>
    </location>
</feature>
<feature type="modified residue" description="N6-succinyllysine; alternate" evidence="2">
    <location>
        <position position="358"/>
    </location>
</feature>
<feature type="modified residue" description="Phosphoserine" evidence="24">
    <location>
        <position position="433"/>
    </location>
</feature>
<feature type="modified residue" description="N6-acetyllysine" evidence="2">
    <location>
        <position position="437"/>
    </location>
</feature>
<feature type="modified residue" description="Phosphoserine" evidence="24">
    <location>
        <position position="440"/>
    </location>
</feature>
<feature type="modified residue" description="N6-acetyllysine; alternate" evidence="2">
    <location>
        <position position="447"/>
    </location>
</feature>
<feature type="modified residue" description="N6-succinyllysine; alternate" evidence="2">
    <location>
        <position position="447"/>
    </location>
</feature>
<feature type="modified residue" description="Phosphoserine" evidence="2">
    <location>
        <position position="456"/>
    </location>
</feature>
<feature type="modified residue" description="N6-acetyllysine; alternate" evidence="2">
    <location>
        <position position="473"/>
    </location>
</feature>
<feature type="modified residue" description="N6-succinyllysine; alternate" evidence="2">
    <location>
        <position position="473"/>
    </location>
</feature>
<feature type="modified residue" description="Phosphoserine" evidence="1">
    <location>
        <position position="477"/>
    </location>
</feature>
<feature type="splice variant" id="VSP_042892" description="In isoform 2." evidence="16">
    <location>
        <begin position="187"/>
        <end position="228"/>
    </location>
</feature>
<feature type="splice variant" id="VSP_047445" description="In isoform 3." evidence="17">
    <location>
        <begin position="229"/>
        <end position="283"/>
    </location>
</feature>
<feature type="sequence variant" id="VAR_032757" description="In HMGCS2D; abolished protein expression; dbSNP:rs28937320." evidence="7 12">
    <original>V</original>
    <variation>M</variation>
    <location>
        <position position="54"/>
    </location>
</feature>
<feature type="sequence variant" id="VAR_083500" description="In HMGCS2D; decreased protein abundance; abolished enzymatic activity; dbSNP:rs768707273." evidence="14">
    <original>R</original>
    <variation>W</variation>
    <location>
        <position position="112"/>
    </location>
</feature>
<feature type="sequence variant" id="VAR_083501" description="In HMGCS2D; decreased protein abundance; stong reduction of enzymatic activity; dbSNP:rs775528207." evidence="14">
    <original>V</original>
    <variation>L</variation>
    <location>
        <position position="144"/>
    </location>
</feature>
<feature type="sequence variant" id="VAR_032758" description="In HMGCS2D; abolished enzymatic activity; dbSNP:rs137852640." evidence="7 12">
    <original>Y</original>
    <variation>C</variation>
    <location>
        <position position="167"/>
    </location>
</feature>
<feature type="sequence variant" id="VAR_083502" description="In HMGCS2D; dbSNP:rs746217014." evidence="13">
    <original>G</original>
    <variation>S</variation>
    <location>
        <position position="168"/>
    </location>
</feature>
<feature type="sequence variant" id="VAR_083503" description="In HMGCS2D; decreased protein abundance; abolished enzymatic activity; dbSNP:rs1237226874." evidence="13">
    <original>G</original>
    <variation>D</variation>
    <location>
        <position position="169"/>
    </location>
</feature>
<feature type="sequence variant" id="VAR_032711" description="In HMGCS2D; reduced peptide level; strong reduction of enzymatic activity; dbSNP:rs137852636." evidence="5 12">
    <original>F</original>
    <variation>L</variation>
    <location>
        <position position="174"/>
    </location>
</feature>
<feature type="sequence variant" id="VAR_083504" description="In HMGCS2D; strong decreased of protein expression; abolished enzymatic activity." evidence="13">
    <original>W</original>
    <variation>R</variation>
    <location>
        <position position="185"/>
    </location>
</feature>
<feature type="sequence variant" id="VAR_083505" description="In HMGCS2D; abolished protein expression; dbSNP:rs761373362." evidence="8 12">
    <original>R</original>
    <variation>H</variation>
    <location>
        <position position="188"/>
    </location>
</feature>
<feature type="sequence variant" id="VAR_032759" description="In HMGCS2D; abolished protein expression; dbSNP:rs137852638." evidence="6 12">
    <original>G</original>
    <variation>R</variation>
    <location>
        <position position="212"/>
    </location>
</feature>
<feature type="sequence variant" id="VAR_083506" description="In HMGCS2D; decreased protein abundance; abolished enzymatic activity; dbSNP:rs1002548815." evidence="13">
    <original>G</original>
    <variation>V</variation>
    <location>
        <position position="232"/>
    </location>
</feature>
<feature type="sequence variant" id="VAR_083507" description="In HMGCS2D; decreased protein abundance; abolished enzymatic activity; dbSNP:rs918691885." evidence="13">
    <original>L</original>
    <variation>S</variation>
    <location>
        <position position="266"/>
    </location>
</feature>
<feature type="sequence variant" id="VAR_083508" description="In HMGCS2D; abolished enzymatic activity." evidence="8 12">
    <original>M</original>
    <variation>T</variation>
    <location>
        <position position="307"/>
    </location>
</feature>
<feature type="sequence variant" id="VAR_083509" description="In HMGCS2D." evidence="13">
    <original>S</original>
    <variation>P</variation>
    <location>
        <position position="360"/>
    </location>
</feature>
<feature type="sequence variant" id="VAR_083510" description="In HMGCS2D; abolished protein expression; dbSNP:rs752626288." evidence="12">
    <original>G</original>
    <variation>R</variation>
    <location>
        <position position="388"/>
    </location>
</feature>
<feature type="sequence variant" id="VAR_083511" description="In HMGCS2D." evidence="12">
    <location>
        <begin position="424"/>
        <end position="508"/>
    </location>
</feature>
<feature type="sequence variant" id="VAR_083512" description="In HMGCS2D; decreased protein abundance; abolished enzymatic activity; requires 2 nucleotide substitutions." evidence="13">
    <original>F</original>
    <variation>T</variation>
    <location>
        <position position="470"/>
    </location>
</feature>
<feature type="sequence variant" id="VAR_032760" description="In HMGCS2D; abolished enzymatic activity; dbSNP:rs137852639." evidence="6 12">
    <original>R</original>
    <variation>H</variation>
    <location>
        <position position="500"/>
    </location>
</feature>
<feature type="sequence variant" id="VAR_083513" description="In HMGCS2D; decreased protein abundance; stong reduction of enzymatic activity." evidence="13">
    <original>Y</original>
    <variation>C</variation>
    <location>
        <position position="503"/>
    </location>
</feature>
<feature type="sequence variant" id="VAR_083514" description="In HMGCS2D; decreased protein abundance; stong reduction of enzymatic activity; dbSNP:rs758519315." evidence="13">
    <original>R</original>
    <variation>Q</variation>
    <location>
        <position position="505"/>
    </location>
</feature>
<feature type="sequence conflict" description="In Ref. 3; CAG33131." evidence="18" ref="3">
    <original>H</original>
    <variation>Y</variation>
    <location>
        <position position="234"/>
    </location>
</feature>
<feature type="sequence conflict" description="In Ref. 3; CAG33131." evidence="18" ref="3">
    <original>S</original>
    <variation>T</variation>
    <location>
        <position position="385"/>
    </location>
</feature>
<feature type="strand" evidence="25">
    <location>
        <begin position="55"/>
        <end position="62"/>
    </location>
</feature>
<feature type="strand" evidence="25">
    <location>
        <begin position="65"/>
        <end position="69"/>
    </location>
</feature>
<feature type="helix" evidence="25">
    <location>
        <begin position="70"/>
        <end position="76"/>
    </location>
</feature>
<feature type="helix" evidence="25">
    <location>
        <begin position="83"/>
        <end position="88"/>
    </location>
</feature>
<feature type="strand" evidence="25">
    <location>
        <begin position="92"/>
        <end position="94"/>
    </location>
</feature>
<feature type="helix" evidence="25">
    <location>
        <begin position="102"/>
        <end position="117"/>
    </location>
</feature>
<feature type="helix" evidence="25">
    <location>
        <begin position="121"/>
        <end position="123"/>
    </location>
</feature>
<feature type="strand" evidence="25">
    <location>
        <begin position="124"/>
        <end position="130"/>
    </location>
</feature>
<feature type="strand" evidence="25">
    <location>
        <begin position="137"/>
        <end position="139"/>
    </location>
</feature>
<feature type="helix" evidence="25">
    <location>
        <begin position="141"/>
        <end position="145"/>
    </location>
</feature>
<feature type="helix" evidence="25">
    <location>
        <begin position="146"/>
        <end position="148"/>
    </location>
</feature>
<feature type="helix" evidence="25">
    <location>
        <begin position="150"/>
        <end position="152"/>
    </location>
</feature>
<feature type="strand" evidence="25">
    <location>
        <begin position="161"/>
        <end position="164"/>
    </location>
</feature>
<feature type="helix" evidence="25">
    <location>
        <begin position="165"/>
        <end position="167"/>
    </location>
</feature>
<feature type="helix" evidence="25">
    <location>
        <begin position="168"/>
        <end position="180"/>
    </location>
</feature>
<feature type="strand" evidence="25">
    <location>
        <begin position="189"/>
        <end position="198"/>
    </location>
</feature>
<feature type="helix" evidence="25">
    <location>
        <begin position="206"/>
        <end position="208"/>
    </location>
</feature>
<feature type="strand" evidence="25">
    <location>
        <begin position="210"/>
        <end position="221"/>
    </location>
</feature>
<feature type="strand" evidence="25">
    <location>
        <begin position="223"/>
        <end position="226"/>
    </location>
</feature>
<feature type="strand" evidence="25">
    <location>
        <begin position="232"/>
        <end position="235"/>
    </location>
</feature>
<feature type="strand" evidence="25">
    <location>
        <begin position="240"/>
        <end position="242"/>
    </location>
</feature>
<feature type="helix" evidence="25">
    <location>
        <begin position="255"/>
        <end position="283"/>
    </location>
</feature>
<feature type="helix" evidence="25">
    <location>
        <begin position="292"/>
        <end position="294"/>
    </location>
</feature>
<feature type="strand" evidence="25">
    <location>
        <begin position="296"/>
        <end position="300"/>
    </location>
</feature>
<feature type="helix" evidence="25">
    <location>
        <begin position="305"/>
        <end position="322"/>
    </location>
</feature>
<feature type="helix" evidence="25">
    <location>
        <begin position="325"/>
        <end position="331"/>
    </location>
</feature>
<feature type="helix" evidence="25">
    <location>
        <begin position="333"/>
        <end position="338"/>
    </location>
</feature>
<feature type="helix" evidence="25">
    <location>
        <begin position="343"/>
        <end position="347"/>
    </location>
</feature>
<feature type="helix" evidence="25">
    <location>
        <begin position="350"/>
        <end position="367"/>
    </location>
</feature>
<feature type="helix" evidence="25">
    <location>
        <begin position="369"/>
        <end position="372"/>
    </location>
</feature>
<feature type="helix" evidence="25">
    <location>
        <begin position="373"/>
        <end position="378"/>
    </location>
</feature>
<feature type="helix" evidence="25">
    <location>
        <begin position="382"/>
        <end position="384"/>
    </location>
</feature>
<feature type="helix" evidence="25">
    <location>
        <begin position="385"/>
        <end position="396"/>
    </location>
</feature>
<feature type="helix" evidence="25">
    <location>
        <begin position="399"/>
        <end position="402"/>
    </location>
</feature>
<feature type="strand" evidence="25">
    <location>
        <begin position="406"/>
        <end position="413"/>
    </location>
</feature>
<feature type="turn" evidence="25">
    <location>
        <begin position="414"/>
        <end position="416"/>
    </location>
</feature>
<feature type="strand" evidence="25">
    <location>
        <begin position="417"/>
        <end position="425"/>
    </location>
</feature>
<feature type="helix" evidence="25">
    <location>
        <begin position="434"/>
        <end position="440"/>
    </location>
</feature>
<feature type="turn" evidence="25">
    <location>
        <begin position="441"/>
        <end position="444"/>
    </location>
</feature>
<feature type="helix" evidence="25">
    <location>
        <begin position="445"/>
        <end position="450"/>
    </location>
</feature>
<feature type="strand" evidence="25">
    <location>
        <begin position="452"/>
        <end position="455"/>
    </location>
</feature>
<feature type="helix" evidence="25">
    <location>
        <begin position="457"/>
        <end position="470"/>
    </location>
</feature>
<feature type="helix" evidence="25">
    <location>
        <begin position="482"/>
        <end position="484"/>
    </location>
</feature>
<feature type="strand" evidence="25">
    <location>
        <begin position="490"/>
        <end position="495"/>
    </location>
</feature>
<feature type="strand" evidence="25">
    <location>
        <begin position="501"/>
        <end position="505"/>
    </location>
</feature>
<organism>
    <name type="scientific">Homo sapiens</name>
    <name type="common">Human</name>
    <dbReference type="NCBI Taxonomy" id="9606"/>
    <lineage>
        <taxon>Eukaryota</taxon>
        <taxon>Metazoa</taxon>
        <taxon>Chordata</taxon>
        <taxon>Craniata</taxon>
        <taxon>Vertebrata</taxon>
        <taxon>Euteleostomi</taxon>
        <taxon>Mammalia</taxon>
        <taxon>Eutheria</taxon>
        <taxon>Euarchontoglires</taxon>
        <taxon>Primates</taxon>
        <taxon>Haplorrhini</taxon>
        <taxon>Catarrhini</taxon>
        <taxon>Hominidae</taxon>
        <taxon>Homo</taxon>
    </lineage>
</organism>
<evidence type="ECO:0000250" key="1">
    <source>
        <dbReference type="UniProtKB" id="P22791"/>
    </source>
</evidence>
<evidence type="ECO:0000250" key="2">
    <source>
        <dbReference type="UniProtKB" id="P54869"/>
    </source>
</evidence>
<evidence type="ECO:0000250" key="3">
    <source>
        <dbReference type="UniProtKB" id="Q2KIE6"/>
    </source>
</evidence>
<evidence type="ECO:0000255" key="4">
    <source>
        <dbReference type="PROSITE-ProRule" id="PRU10116"/>
    </source>
</evidence>
<evidence type="ECO:0000269" key="5">
    <source>
    </source>
</evidence>
<evidence type="ECO:0000269" key="6">
    <source>
    </source>
</evidence>
<evidence type="ECO:0000269" key="7">
    <source>
    </source>
</evidence>
<evidence type="ECO:0000269" key="8">
    <source>
    </source>
</evidence>
<evidence type="ECO:0000269" key="9">
    <source>
    </source>
</evidence>
<evidence type="ECO:0000269" key="10">
    <source>
    </source>
</evidence>
<evidence type="ECO:0000269" key="11">
    <source>
    </source>
</evidence>
<evidence type="ECO:0000269" key="12">
    <source>
    </source>
</evidence>
<evidence type="ECO:0000269" key="13">
    <source>
    </source>
</evidence>
<evidence type="ECO:0000269" key="14">
    <source>
    </source>
</evidence>
<evidence type="ECO:0000269" key="15">
    <source>
    </source>
</evidence>
<evidence type="ECO:0000303" key="16">
    <source>
    </source>
</evidence>
<evidence type="ECO:0000303" key="17">
    <source>
    </source>
</evidence>
<evidence type="ECO:0000305" key="18"/>
<evidence type="ECO:0000305" key="19">
    <source>
    </source>
</evidence>
<evidence type="ECO:0000305" key="20">
    <source>
    </source>
</evidence>
<evidence type="ECO:0000305" key="21">
    <source>
    </source>
</evidence>
<evidence type="ECO:0000305" key="22">
    <source>
    </source>
</evidence>
<evidence type="ECO:0007744" key="23">
    <source>
        <dbReference type="PDB" id="2WYA"/>
    </source>
</evidence>
<evidence type="ECO:0007744" key="24">
    <source>
    </source>
</evidence>
<evidence type="ECO:0007829" key="25">
    <source>
        <dbReference type="PDB" id="2WYA"/>
    </source>
</evidence>
<protein>
    <recommendedName>
        <fullName>Hydroxymethylglutaryl-CoA synthase, mitochondrial</fullName>
        <shortName>HMG-CoA synthase</shortName>
        <ecNumber evidence="5 12 14">2.3.3.10</ecNumber>
    </recommendedName>
    <alternativeName>
        <fullName>3-hydroxy-3-methylglutaryl coenzyme A synthase</fullName>
    </alternativeName>
</protein>
<dbReference type="EC" id="2.3.3.10" evidence="5 12 14"/>
<dbReference type="EMBL" id="X83618">
    <property type="protein sequence ID" value="CAA58593.1"/>
    <property type="molecule type" value="mRNA"/>
</dbReference>
<dbReference type="EMBL" id="U81859">
    <property type="protein sequence ID" value="AAB72036.1"/>
    <property type="molecule type" value="Genomic_DNA"/>
</dbReference>
<dbReference type="EMBL" id="U81851">
    <property type="protein sequence ID" value="AAB72036.1"/>
    <property type="status" value="JOINED"/>
    <property type="molecule type" value="Genomic_DNA"/>
</dbReference>
<dbReference type="EMBL" id="U81852">
    <property type="protein sequence ID" value="AAB72036.1"/>
    <property type="status" value="JOINED"/>
    <property type="molecule type" value="Genomic_DNA"/>
</dbReference>
<dbReference type="EMBL" id="U81853">
    <property type="protein sequence ID" value="AAB72036.1"/>
    <property type="status" value="JOINED"/>
    <property type="molecule type" value="Genomic_DNA"/>
</dbReference>
<dbReference type="EMBL" id="U81854">
    <property type="protein sequence ID" value="AAB72036.1"/>
    <property type="status" value="JOINED"/>
    <property type="molecule type" value="Genomic_DNA"/>
</dbReference>
<dbReference type="EMBL" id="U81855">
    <property type="protein sequence ID" value="AAB72036.1"/>
    <property type="status" value="JOINED"/>
    <property type="molecule type" value="Genomic_DNA"/>
</dbReference>
<dbReference type="EMBL" id="U81856">
    <property type="protein sequence ID" value="AAB72036.1"/>
    <property type="status" value="JOINED"/>
    <property type="molecule type" value="Genomic_DNA"/>
</dbReference>
<dbReference type="EMBL" id="U81857">
    <property type="protein sequence ID" value="AAB72036.1"/>
    <property type="status" value="JOINED"/>
    <property type="molecule type" value="Genomic_DNA"/>
</dbReference>
<dbReference type="EMBL" id="U81858">
    <property type="protein sequence ID" value="AAB72036.1"/>
    <property type="status" value="JOINED"/>
    <property type="molecule type" value="Genomic_DNA"/>
</dbReference>
<dbReference type="EMBL" id="CR456850">
    <property type="protein sequence ID" value="CAG33131.1"/>
    <property type="molecule type" value="mRNA"/>
</dbReference>
<dbReference type="EMBL" id="AK303777">
    <property type="protein sequence ID" value="BAH14049.1"/>
    <property type="molecule type" value="mRNA"/>
</dbReference>
<dbReference type="EMBL" id="AL589734">
    <property type="status" value="NOT_ANNOTATED_CDS"/>
    <property type="molecule type" value="Genomic_DNA"/>
</dbReference>
<dbReference type="EMBL" id="CH471122">
    <property type="protein sequence ID" value="EAW56709.1"/>
    <property type="molecule type" value="Genomic_DNA"/>
</dbReference>
<dbReference type="EMBL" id="BC044217">
    <property type="protein sequence ID" value="AAH44217.1"/>
    <property type="molecule type" value="mRNA"/>
</dbReference>
<dbReference type="EMBL" id="U12788">
    <property type="protein sequence ID" value="AAA92673.1"/>
    <property type="molecule type" value="mRNA"/>
</dbReference>
<dbReference type="EMBL" id="U12789">
    <property type="protein sequence ID" value="AAA92674.1"/>
    <property type="molecule type" value="mRNA"/>
</dbReference>
<dbReference type="EMBL" id="GU433940">
    <property type="protein sequence ID" value="ADD21696.1"/>
    <property type="molecule type" value="mRNA"/>
</dbReference>
<dbReference type="CCDS" id="CCDS53353.1">
    <molecule id="P54868-2"/>
</dbReference>
<dbReference type="CCDS" id="CCDS905.1">
    <molecule id="P54868-1"/>
</dbReference>
<dbReference type="PIR" id="S71623">
    <property type="entry name" value="S71623"/>
</dbReference>
<dbReference type="RefSeq" id="NP_001159579.1">
    <molecule id="P54868-2"/>
    <property type="nucleotide sequence ID" value="NM_001166107.1"/>
</dbReference>
<dbReference type="RefSeq" id="NP_005509.1">
    <molecule id="P54868-1"/>
    <property type="nucleotide sequence ID" value="NM_005518.4"/>
</dbReference>
<dbReference type="RefSeq" id="XP_011539615.1">
    <property type="nucleotide sequence ID" value="XM_011541313.1"/>
</dbReference>
<dbReference type="PDB" id="2WYA">
    <property type="method" value="X-ray"/>
    <property type="resolution" value="1.70 A"/>
    <property type="chains" value="A/B/C/D=51-508"/>
</dbReference>
<dbReference type="PDBsum" id="2WYA"/>
<dbReference type="SMR" id="P54868"/>
<dbReference type="BioGRID" id="109401">
    <property type="interactions" value="23"/>
</dbReference>
<dbReference type="FunCoup" id="P54868">
    <property type="interactions" value="875"/>
</dbReference>
<dbReference type="IntAct" id="P54868">
    <property type="interactions" value="7"/>
</dbReference>
<dbReference type="MINT" id="P54868"/>
<dbReference type="STRING" id="9606.ENSP00000358414"/>
<dbReference type="SwissLipids" id="SLP:000001249">
    <molecule id="P54868-1"/>
</dbReference>
<dbReference type="GlyGen" id="P54868">
    <property type="glycosylation" value="1 site, 1 O-linked glycan (1 site)"/>
</dbReference>
<dbReference type="iPTMnet" id="P54868"/>
<dbReference type="PhosphoSitePlus" id="P54868"/>
<dbReference type="SwissPalm" id="P54868"/>
<dbReference type="BioMuta" id="HMGCS2"/>
<dbReference type="DMDM" id="1708234"/>
<dbReference type="REPRODUCTION-2DPAGE" id="IPI00008934"/>
<dbReference type="jPOST" id="P54868"/>
<dbReference type="MassIVE" id="P54868"/>
<dbReference type="PaxDb" id="9606-ENSP00000358414"/>
<dbReference type="PeptideAtlas" id="P54868"/>
<dbReference type="ProteomicsDB" id="56743">
    <molecule id="P54868-1"/>
</dbReference>
<dbReference type="ProteomicsDB" id="56744">
    <molecule id="P54868-2"/>
</dbReference>
<dbReference type="Antibodypedia" id="33918">
    <property type="antibodies" value="201 antibodies from 26 providers"/>
</dbReference>
<dbReference type="DNASU" id="3158"/>
<dbReference type="Ensembl" id="ENST00000369406.8">
    <molecule id="P54868-1"/>
    <property type="protein sequence ID" value="ENSP00000358414.3"/>
    <property type="gene ID" value="ENSG00000134240.12"/>
</dbReference>
<dbReference type="Ensembl" id="ENST00000544913.2">
    <molecule id="P54868-2"/>
    <property type="protein sequence ID" value="ENSP00000439495.2"/>
    <property type="gene ID" value="ENSG00000134240.12"/>
</dbReference>
<dbReference type="GeneID" id="3158"/>
<dbReference type="KEGG" id="hsa:3158"/>
<dbReference type="MANE-Select" id="ENST00000369406.8">
    <property type="protein sequence ID" value="ENSP00000358414.3"/>
    <property type="RefSeq nucleotide sequence ID" value="NM_005518.4"/>
    <property type="RefSeq protein sequence ID" value="NP_005509.1"/>
</dbReference>
<dbReference type="UCSC" id="uc001eid.4">
    <molecule id="P54868-1"/>
    <property type="organism name" value="human"/>
</dbReference>
<dbReference type="AGR" id="HGNC:5008"/>
<dbReference type="CTD" id="3158"/>
<dbReference type="DisGeNET" id="3158"/>
<dbReference type="GeneCards" id="HMGCS2"/>
<dbReference type="HGNC" id="HGNC:5008">
    <property type="gene designation" value="HMGCS2"/>
</dbReference>
<dbReference type="HPA" id="ENSG00000134240">
    <property type="expression patterns" value="Tissue enriched (liver)"/>
</dbReference>
<dbReference type="MalaCards" id="HMGCS2"/>
<dbReference type="MIM" id="600234">
    <property type="type" value="gene"/>
</dbReference>
<dbReference type="MIM" id="605911">
    <property type="type" value="phenotype"/>
</dbReference>
<dbReference type="neXtProt" id="NX_P54868"/>
<dbReference type="OpenTargets" id="ENSG00000134240"/>
<dbReference type="Orphanet" id="35701">
    <property type="disease" value="3-hydroxy-3-methylglutaryl-CoA synthase deficiency"/>
</dbReference>
<dbReference type="PharmGKB" id="PA29338"/>
<dbReference type="VEuPathDB" id="HostDB:ENSG00000134240"/>
<dbReference type="eggNOG" id="KOG1393">
    <property type="taxonomic scope" value="Eukaryota"/>
</dbReference>
<dbReference type="GeneTree" id="ENSGT00390000006096"/>
<dbReference type="HOGENOM" id="CLU_008065_0_1_1"/>
<dbReference type="InParanoid" id="P54868"/>
<dbReference type="OMA" id="ARNGNMY"/>
<dbReference type="OrthoDB" id="1269963at2759"/>
<dbReference type="PAN-GO" id="P54868">
    <property type="GO annotations" value="4 GO annotations based on evolutionary models"/>
</dbReference>
<dbReference type="PhylomeDB" id="P54868"/>
<dbReference type="TreeFam" id="TF105361"/>
<dbReference type="BioCyc" id="MetaCyc:HS05836-MONOMER"/>
<dbReference type="BRENDA" id="2.3.3.10">
    <property type="organism ID" value="2681"/>
</dbReference>
<dbReference type="PathwayCommons" id="P54868"/>
<dbReference type="Reactome" id="R-HSA-1989781">
    <property type="pathway name" value="PPARA activates gene expression"/>
</dbReference>
<dbReference type="Reactome" id="R-HSA-77111">
    <property type="pathway name" value="Synthesis of Ketone Bodies"/>
</dbReference>
<dbReference type="Reactome" id="R-HSA-9837999">
    <property type="pathway name" value="Mitochondrial protein degradation"/>
</dbReference>
<dbReference type="SignaLink" id="P54868"/>
<dbReference type="SIGNOR" id="P54868"/>
<dbReference type="UniPathway" id="UPA00058">
    <property type="reaction ID" value="UER00102"/>
</dbReference>
<dbReference type="BioGRID-ORCS" id="3158">
    <property type="hits" value="14 hits in 1148 CRISPR screens"/>
</dbReference>
<dbReference type="ChiTaRS" id="HMGCS2">
    <property type="organism name" value="human"/>
</dbReference>
<dbReference type="EvolutionaryTrace" id="P54868"/>
<dbReference type="GenomeRNAi" id="3158"/>
<dbReference type="Pharos" id="P54868">
    <property type="development level" value="Tbio"/>
</dbReference>
<dbReference type="PRO" id="PR:P54868"/>
<dbReference type="Proteomes" id="UP000005640">
    <property type="component" value="Chromosome 1"/>
</dbReference>
<dbReference type="RNAct" id="P54868">
    <property type="molecule type" value="protein"/>
</dbReference>
<dbReference type="Bgee" id="ENSG00000134240">
    <property type="expression patterns" value="Expressed in right lobe of liver and 139 other cell types or tissues"/>
</dbReference>
<dbReference type="ExpressionAtlas" id="P54868">
    <property type="expression patterns" value="baseline and differential"/>
</dbReference>
<dbReference type="GO" id="GO:0005759">
    <property type="term" value="C:mitochondrial matrix"/>
    <property type="evidence" value="ECO:0000304"/>
    <property type="project" value="Reactome"/>
</dbReference>
<dbReference type="GO" id="GO:0005739">
    <property type="term" value="C:mitochondrion"/>
    <property type="evidence" value="ECO:0000314"/>
    <property type="project" value="HPA"/>
</dbReference>
<dbReference type="GO" id="GO:0004421">
    <property type="term" value="F:hydroxymethylglutaryl-CoA synthase activity"/>
    <property type="evidence" value="ECO:0000315"/>
    <property type="project" value="UniProtKB"/>
</dbReference>
<dbReference type="GO" id="GO:0042802">
    <property type="term" value="F:identical protein binding"/>
    <property type="evidence" value="ECO:0000314"/>
    <property type="project" value="UniProtKB"/>
</dbReference>
<dbReference type="GO" id="GO:0006084">
    <property type="term" value="P:acetyl-CoA metabolic process"/>
    <property type="evidence" value="ECO:0000315"/>
    <property type="project" value="UniProtKB"/>
</dbReference>
<dbReference type="GO" id="GO:0060612">
    <property type="term" value="P:adipose tissue development"/>
    <property type="evidence" value="ECO:0007669"/>
    <property type="project" value="Ensembl"/>
</dbReference>
<dbReference type="GO" id="GO:0071230">
    <property type="term" value="P:cellular response to amino acid stimulus"/>
    <property type="evidence" value="ECO:0007669"/>
    <property type="project" value="Ensembl"/>
</dbReference>
<dbReference type="GO" id="GO:0071398">
    <property type="term" value="P:cellular response to fatty acid"/>
    <property type="evidence" value="ECO:0007669"/>
    <property type="project" value="Ensembl"/>
</dbReference>
<dbReference type="GO" id="GO:0071385">
    <property type="term" value="P:cellular response to glucocorticoid stimulus"/>
    <property type="evidence" value="ECO:0007669"/>
    <property type="project" value="Ensembl"/>
</dbReference>
<dbReference type="GO" id="GO:0032869">
    <property type="term" value="P:cellular response to insulin stimulus"/>
    <property type="evidence" value="ECO:0007669"/>
    <property type="project" value="Ensembl"/>
</dbReference>
<dbReference type="GO" id="GO:0071222">
    <property type="term" value="P:cellular response to lipopolysaccharide"/>
    <property type="evidence" value="ECO:0007669"/>
    <property type="project" value="Ensembl"/>
</dbReference>
<dbReference type="GO" id="GO:0006695">
    <property type="term" value="P:cholesterol biosynthetic process"/>
    <property type="evidence" value="ECO:0007669"/>
    <property type="project" value="UniProtKB-KW"/>
</dbReference>
<dbReference type="GO" id="GO:0010142">
    <property type="term" value="P:farnesyl diphosphate biosynthetic process, mevalonate pathway"/>
    <property type="evidence" value="ECO:0000318"/>
    <property type="project" value="GO_Central"/>
</dbReference>
<dbReference type="GO" id="GO:0046951">
    <property type="term" value="P:ketone body biosynthetic process"/>
    <property type="evidence" value="ECO:0000315"/>
    <property type="project" value="UniProtKB"/>
</dbReference>
<dbReference type="GO" id="GO:0001822">
    <property type="term" value="P:kidney development"/>
    <property type="evidence" value="ECO:0007669"/>
    <property type="project" value="Ensembl"/>
</dbReference>
<dbReference type="GO" id="GO:0001889">
    <property type="term" value="P:liver development"/>
    <property type="evidence" value="ECO:0007669"/>
    <property type="project" value="Ensembl"/>
</dbReference>
<dbReference type="GO" id="GO:0030324">
    <property type="term" value="P:lung development"/>
    <property type="evidence" value="ECO:0007669"/>
    <property type="project" value="Ensembl"/>
</dbReference>
<dbReference type="GO" id="GO:0007494">
    <property type="term" value="P:midgut development"/>
    <property type="evidence" value="ECO:0007669"/>
    <property type="project" value="Ensembl"/>
</dbReference>
<dbReference type="GO" id="GO:0033555">
    <property type="term" value="P:multicellular organismal response to stress"/>
    <property type="evidence" value="ECO:0007669"/>
    <property type="project" value="Ensembl"/>
</dbReference>
<dbReference type="GO" id="GO:0051591">
    <property type="term" value="P:response to cAMP"/>
    <property type="evidence" value="ECO:0007669"/>
    <property type="project" value="Ensembl"/>
</dbReference>
<dbReference type="GO" id="GO:0045471">
    <property type="term" value="P:response to ethanol"/>
    <property type="evidence" value="ECO:0007669"/>
    <property type="project" value="Ensembl"/>
</dbReference>
<dbReference type="GO" id="GO:0033762">
    <property type="term" value="P:response to glucagon"/>
    <property type="evidence" value="ECO:0007669"/>
    <property type="project" value="Ensembl"/>
</dbReference>
<dbReference type="GO" id="GO:0060416">
    <property type="term" value="P:response to growth hormone"/>
    <property type="evidence" value="ECO:0007669"/>
    <property type="project" value="Ensembl"/>
</dbReference>
<dbReference type="GO" id="GO:0070543">
    <property type="term" value="P:response to linoleic acid"/>
    <property type="evidence" value="ECO:0007669"/>
    <property type="project" value="Ensembl"/>
</dbReference>
<dbReference type="GO" id="GO:0010038">
    <property type="term" value="P:response to metal ion"/>
    <property type="evidence" value="ECO:0007669"/>
    <property type="project" value="Ensembl"/>
</dbReference>
<dbReference type="GO" id="GO:0034284">
    <property type="term" value="P:response to monosaccharide"/>
    <property type="evidence" value="ECO:0007669"/>
    <property type="project" value="Ensembl"/>
</dbReference>
<dbReference type="GO" id="GO:0007584">
    <property type="term" value="P:response to nutrient"/>
    <property type="evidence" value="ECO:0007669"/>
    <property type="project" value="Ensembl"/>
</dbReference>
<dbReference type="GO" id="GO:0034696">
    <property type="term" value="P:response to prostaglandin F"/>
    <property type="evidence" value="ECO:0007669"/>
    <property type="project" value="Ensembl"/>
</dbReference>
<dbReference type="GO" id="GO:0042594">
    <property type="term" value="P:response to starvation"/>
    <property type="evidence" value="ECO:0007669"/>
    <property type="project" value="Ensembl"/>
</dbReference>
<dbReference type="GO" id="GO:0009266">
    <property type="term" value="P:response to temperature stimulus"/>
    <property type="evidence" value="ECO:0007669"/>
    <property type="project" value="Ensembl"/>
</dbReference>
<dbReference type="GO" id="GO:0033574">
    <property type="term" value="P:response to testosterone"/>
    <property type="evidence" value="ECO:0007669"/>
    <property type="project" value="Ensembl"/>
</dbReference>
<dbReference type="GO" id="GO:0034014">
    <property type="term" value="P:response to triglyceride"/>
    <property type="evidence" value="ECO:0007669"/>
    <property type="project" value="Ensembl"/>
</dbReference>
<dbReference type="GO" id="GO:0009410">
    <property type="term" value="P:response to xenobiotic stimulus"/>
    <property type="evidence" value="ECO:0007669"/>
    <property type="project" value="Ensembl"/>
</dbReference>
<dbReference type="CDD" id="cd00827">
    <property type="entry name" value="init_cond_enzymes"/>
    <property type="match status" value="1"/>
</dbReference>
<dbReference type="FunFam" id="3.40.47.10:FF:000008">
    <property type="entry name" value="3-hydroxy-3-methylglutaryl coenzyme A synthase"/>
    <property type="match status" value="1"/>
</dbReference>
<dbReference type="Gene3D" id="3.40.47.10">
    <property type="match status" value="1"/>
</dbReference>
<dbReference type="InterPro" id="IPR000590">
    <property type="entry name" value="HMG_CoA_synt_AS"/>
</dbReference>
<dbReference type="InterPro" id="IPR013746">
    <property type="entry name" value="HMG_CoA_synt_C_dom"/>
</dbReference>
<dbReference type="InterPro" id="IPR013528">
    <property type="entry name" value="HMG_CoA_synth_N"/>
</dbReference>
<dbReference type="InterPro" id="IPR010122">
    <property type="entry name" value="HMG_CoA_synthase_euk"/>
</dbReference>
<dbReference type="InterPro" id="IPR016039">
    <property type="entry name" value="Thiolase-like"/>
</dbReference>
<dbReference type="NCBIfam" id="TIGR01833">
    <property type="entry name" value="HMG-CoA-S_euk"/>
    <property type="match status" value="1"/>
</dbReference>
<dbReference type="PANTHER" id="PTHR43323">
    <property type="entry name" value="3-HYDROXY-3-METHYLGLUTARYL COENZYME A SYNTHASE"/>
    <property type="match status" value="1"/>
</dbReference>
<dbReference type="PANTHER" id="PTHR43323:SF1">
    <property type="entry name" value="HYDROXYMETHYLGLUTARYL-COA SYNTHASE, MITOCHONDRIAL"/>
    <property type="match status" value="1"/>
</dbReference>
<dbReference type="Pfam" id="PF08540">
    <property type="entry name" value="HMG_CoA_synt_C"/>
    <property type="match status" value="1"/>
</dbReference>
<dbReference type="Pfam" id="PF01154">
    <property type="entry name" value="HMG_CoA_synt_N"/>
    <property type="match status" value="1"/>
</dbReference>
<dbReference type="SUPFAM" id="SSF53901">
    <property type="entry name" value="Thiolase-like"/>
    <property type="match status" value="2"/>
</dbReference>
<dbReference type="PROSITE" id="PS01226">
    <property type="entry name" value="HMG_COA_SYNTHASE"/>
    <property type="match status" value="1"/>
</dbReference>
<proteinExistence type="evidence at protein level"/>
<comment type="function">
    <text evidence="5 12 14">Catalyzes the first irreversible step in ketogenesis, condensing acetyl-CoA to acetoacetyl-CoA to form HMG-CoA, which is converted by HMG-CoA reductase (HMGCR) into mevalonate.</text>
</comment>
<comment type="catalytic activity">
    <reaction evidence="5 12 14">
        <text>acetoacetyl-CoA + acetyl-CoA + H2O = (3S)-3-hydroxy-3-methylglutaryl-CoA + CoA + H(+)</text>
        <dbReference type="Rhea" id="RHEA:10188"/>
        <dbReference type="ChEBI" id="CHEBI:15377"/>
        <dbReference type="ChEBI" id="CHEBI:15378"/>
        <dbReference type="ChEBI" id="CHEBI:43074"/>
        <dbReference type="ChEBI" id="CHEBI:57286"/>
        <dbReference type="ChEBI" id="CHEBI:57287"/>
        <dbReference type="ChEBI" id="CHEBI:57288"/>
        <dbReference type="EC" id="2.3.3.10"/>
    </reaction>
    <physiologicalReaction direction="left-to-right" evidence="19 21 22">
        <dbReference type="Rhea" id="RHEA:10189"/>
    </physiologicalReaction>
</comment>
<comment type="biophysicochemical properties">
    <kinetics>
        <KM evidence="12">87.3 uM for acetyl-CoA</KM>
    </kinetics>
</comment>
<comment type="pathway">
    <text evidence="18">Metabolic intermediate biosynthesis; (R)-mevalonate biosynthesis; (R)-mevalonate from acetyl-CoA: step 2/3.</text>
</comment>
<comment type="subunit">
    <text evidence="10">Homodimer.</text>
</comment>
<comment type="subcellular location">
    <subcellularLocation>
        <location evidence="1">Mitochondrion</location>
    </subcellularLocation>
</comment>
<comment type="alternative products">
    <event type="alternative splicing"/>
    <isoform>
        <id>P54868-1</id>
        <name>1</name>
        <sequence type="displayed"/>
    </isoform>
    <isoform>
        <id>P54868-2</id>
        <name>2</name>
        <sequence type="described" ref="VSP_042892"/>
    </isoform>
    <isoform>
        <id>P54868-3</id>
        <name>3</name>
        <name evidence="17">HMGCS2delta4</name>
        <sequence type="described" ref="VSP_047445"/>
    </isoform>
</comment>
<comment type="tissue specificity">
    <text evidence="9 11 15">Expression in liver is 200-fold higher than in any other tissue. Low expression in colon, kidney, testis, and pancreas. Very low expression in heart and skeletal muscle (PubMed:16940161, PubMed:21952825, PubMed:7893153). Not detected in brain (PubMed:21952825).</text>
</comment>
<comment type="tissue specificity">
    <molecule>Isoform 3</molecule>
    <text evidence="11">Highest expression detected in heart and skeletal muscle.</text>
</comment>
<comment type="PTM">
    <text evidence="2">Succinylated. Desuccinylated by SIRT5. Succinylation, at least at Lys-83 and Lys-310, inhibits the enzymatic activity.</text>
</comment>
<comment type="disease" evidence="5 6 7 8 12 13 14">
    <disease id="DI-01751">
        <name>3-hydroxy-3-methylglutaryl-CoA synthase-2 deficiency</name>
        <acronym>HMGCS2D</acronym>
        <description>A metabolic disorder characterized by severe hypoketotic hypoglycemia, encephalopathy, and hepatomegaly.</description>
        <dbReference type="MIM" id="605911"/>
    </disease>
    <text>The disease is caused by variants affecting the gene represented in this entry.</text>
</comment>
<comment type="similarity">
    <text evidence="18">Belongs to the thiolase-like superfamily. HMG-CoA synthase family.</text>
</comment>